<dbReference type="EC" id="3.6.5.2" evidence="4"/>
<dbReference type="EMBL" id="M19886">
    <property type="protein sequence ID" value="AAA30417.1"/>
    <property type="molecule type" value="mRNA"/>
</dbReference>
<dbReference type="EMBL" id="BC122723">
    <property type="protein sequence ID" value="AAI22724.1"/>
    <property type="molecule type" value="mRNA"/>
</dbReference>
<dbReference type="PIR" id="B29224">
    <property type="entry name" value="B29224"/>
</dbReference>
<dbReference type="RefSeq" id="NP_776872.1">
    <property type="nucleotide sequence ID" value="NM_174447.4"/>
</dbReference>
<dbReference type="SMR" id="P10948"/>
<dbReference type="FunCoup" id="P10948">
    <property type="interactions" value="566"/>
</dbReference>
<dbReference type="STRING" id="9913.ENSBTAP00000007019"/>
<dbReference type="PaxDb" id="9913-ENSBTAP00000007019"/>
<dbReference type="GeneID" id="282030"/>
<dbReference type="KEGG" id="bta:282030"/>
<dbReference type="CTD" id="5865"/>
<dbReference type="VEuPathDB" id="HostDB:ENSBTAG00000005337"/>
<dbReference type="eggNOG" id="KOG0093">
    <property type="taxonomic scope" value="Eukaryota"/>
</dbReference>
<dbReference type="HOGENOM" id="CLU_041217_10_1_1"/>
<dbReference type="InParanoid" id="P10948"/>
<dbReference type="OMA" id="AICEKMS"/>
<dbReference type="OrthoDB" id="9989112at2759"/>
<dbReference type="TreeFam" id="TF313199"/>
<dbReference type="Reactome" id="R-BTA-8873719">
    <property type="pathway name" value="RAB geranylgeranylation"/>
</dbReference>
<dbReference type="Proteomes" id="UP000009136">
    <property type="component" value="Chromosome 3"/>
</dbReference>
<dbReference type="Bgee" id="ENSBTAG00000005337">
    <property type="expression patterns" value="Expressed in omental fat pad and 70 other cell types or tissues"/>
</dbReference>
<dbReference type="GO" id="GO:0005768">
    <property type="term" value="C:endosome"/>
    <property type="evidence" value="ECO:0000318"/>
    <property type="project" value="GO_Central"/>
</dbReference>
<dbReference type="GO" id="GO:0005794">
    <property type="term" value="C:Golgi apparatus"/>
    <property type="evidence" value="ECO:0007669"/>
    <property type="project" value="UniProtKB-SubCell"/>
</dbReference>
<dbReference type="GO" id="GO:0005886">
    <property type="term" value="C:plasma membrane"/>
    <property type="evidence" value="ECO:0000318"/>
    <property type="project" value="GO_Central"/>
</dbReference>
<dbReference type="GO" id="GO:0008021">
    <property type="term" value="C:synaptic vesicle"/>
    <property type="evidence" value="ECO:0000318"/>
    <property type="project" value="GO_Central"/>
</dbReference>
<dbReference type="GO" id="GO:0005525">
    <property type="term" value="F:GTP binding"/>
    <property type="evidence" value="ECO:0007669"/>
    <property type="project" value="UniProtKB-KW"/>
</dbReference>
<dbReference type="GO" id="GO:0003924">
    <property type="term" value="F:GTPase activity"/>
    <property type="evidence" value="ECO:0000318"/>
    <property type="project" value="GO_Central"/>
</dbReference>
<dbReference type="GO" id="GO:0031489">
    <property type="term" value="F:myosin V binding"/>
    <property type="evidence" value="ECO:0000318"/>
    <property type="project" value="GO_Central"/>
</dbReference>
<dbReference type="GO" id="GO:0006887">
    <property type="term" value="P:exocytosis"/>
    <property type="evidence" value="ECO:0000318"/>
    <property type="project" value="GO_Central"/>
</dbReference>
<dbReference type="GO" id="GO:0015031">
    <property type="term" value="P:protein transport"/>
    <property type="evidence" value="ECO:0007669"/>
    <property type="project" value="UniProtKB-KW"/>
</dbReference>
<dbReference type="CDD" id="cd01865">
    <property type="entry name" value="Rab3"/>
    <property type="match status" value="1"/>
</dbReference>
<dbReference type="FunFam" id="3.40.50.300:FF:000206">
    <property type="entry name" value="Ras-related protein Rab-3C"/>
    <property type="match status" value="1"/>
</dbReference>
<dbReference type="Gene3D" id="3.40.50.300">
    <property type="entry name" value="P-loop containing nucleotide triphosphate hydrolases"/>
    <property type="match status" value="1"/>
</dbReference>
<dbReference type="InterPro" id="IPR027417">
    <property type="entry name" value="P-loop_NTPase"/>
</dbReference>
<dbReference type="InterPro" id="IPR037872">
    <property type="entry name" value="Rab3"/>
</dbReference>
<dbReference type="InterPro" id="IPR005225">
    <property type="entry name" value="Small_GTP-bd"/>
</dbReference>
<dbReference type="InterPro" id="IPR001806">
    <property type="entry name" value="Small_GTPase"/>
</dbReference>
<dbReference type="InterPro" id="IPR050305">
    <property type="entry name" value="Small_GTPase_Rab"/>
</dbReference>
<dbReference type="NCBIfam" id="TIGR00231">
    <property type="entry name" value="small_GTP"/>
    <property type="match status" value="1"/>
</dbReference>
<dbReference type="PANTHER" id="PTHR47980">
    <property type="entry name" value="LD44762P"/>
    <property type="match status" value="1"/>
</dbReference>
<dbReference type="Pfam" id="PF00071">
    <property type="entry name" value="Ras"/>
    <property type="match status" value="1"/>
</dbReference>
<dbReference type="PRINTS" id="PR00449">
    <property type="entry name" value="RASTRNSFRMNG"/>
</dbReference>
<dbReference type="SMART" id="SM00175">
    <property type="entry name" value="RAB"/>
    <property type="match status" value="1"/>
</dbReference>
<dbReference type="SMART" id="SM00176">
    <property type="entry name" value="RAN"/>
    <property type="match status" value="1"/>
</dbReference>
<dbReference type="SMART" id="SM00173">
    <property type="entry name" value="RAS"/>
    <property type="match status" value="1"/>
</dbReference>
<dbReference type="SMART" id="SM00174">
    <property type="entry name" value="RHO"/>
    <property type="match status" value="1"/>
</dbReference>
<dbReference type="SUPFAM" id="SSF52540">
    <property type="entry name" value="P-loop containing nucleoside triphosphate hydrolases"/>
    <property type="match status" value="1"/>
</dbReference>
<dbReference type="PROSITE" id="PS51419">
    <property type="entry name" value="RAB"/>
    <property type="match status" value="1"/>
</dbReference>
<evidence type="ECO:0000250" key="1"/>
<evidence type="ECO:0000250" key="2">
    <source>
        <dbReference type="UniProtKB" id="O95716"/>
    </source>
</evidence>
<evidence type="ECO:0000250" key="3">
    <source>
        <dbReference type="UniProtKB" id="P20336"/>
    </source>
</evidence>
<evidence type="ECO:0000250" key="4">
    <source>
        <dbReference type="UniProtKB" id="P20337"/>
    </source>
</evidence>
<evidence type="ECO:0000250" key="5">
    <source>
        <dbReference type="UniProtKB" id="Q63941"/>
    </source>
</evidence>
<evidence type="ECO:0000250" key="6">
    <source>
        <dbReference type="UniProtKB" id="Q9CZT8"/>
    </source>
</evidence>
<evidence type="ECO:0000305" key="7"/>
<protein>
    <recommendedName>
        <fullName>Ras-related protein Rab-3B</fullName>
        <ecNumber evidence="4">3.6.5.2</ecNumber>
    </recommendedName>
    <alternativeName>
        <fullName>SMG P25B</fullName>
    </alternativeName>
</protein>
<proteinExistence type="evidence at transcript level"/>
<name>RAB3B_BOVIN</name>
<comment type="function">
    <text evidence="4">The small GTPases Rab are key regulators of intracellular membrane trafficking, from the formation of transport vesicles to their fusion with membranes. Rabs cycle between an inactive GDP-bound form and an active GTP-bound form that is able to recruit to membranes different sets of downstream effectors directly responsible for vesicle formation, movement, tethering and fusion.</text>
</comment>
<comment type="catalytic activity">
    <reaction evidence="4">
        <text>GTP + H2O = GDP + phosphate + H(+)</text>
        <dbReference type="Rhea" id="RHEA:19669"/>
        <dbReference type="ChEBI" id="CHEBI:15377"/>
        <dbReference type="ChEBI" id="CHEBI:15378"/>
        <dbReference type="ChEBI" id="CHEBI:37565"/>
        <dbReference type="ChEBI" id="CHEBI:43474"/>
        <dbReference type="ChEBI" id="CHEBI:58189"/>
        <dbReference type="EC" id="3.6.5.2"/>
    </reaction>
    <physiologicalReaction direction="left-to-right" evidence="4">
        <dbReference type="Rhea" id="RHEA:19670"/>
    </physiologicalReaction>
</comment>
<comment type="cofactor">
    <cofactor evidence="4">
        <name>Mg(2+)</name>
        <dbReference type="ChEBI" id="CHEBI:18420"/>
    </cofactor>
</comment>
<comment type="activity regulation">
    <text evidence="3">Regulated by guanine nucleotide exchange factors (GEFs) which promote the exchange of bound GDP for free GTP. Regulated by GTPase activating proteins (GAPs) which increase the GTP hydrolysis activity. Inhibited by GDP dissociation inhibitors (GDIs) which prevent Rab-GDP dissociation.</text>
</comment>
<comment type="subunit">
    <text evidence="4 6">Interacts with RIMS1, RIMS2, RPH3A and RPH3AL. The GTP-bound form interacts with GAS8/DRC4 (via coiled-coil domains) (By similarity). Interacts with GDI2, CHM and CHML; phosphorylation at Thr-86 disrupts these interactions (By similarity). Interacts with MADD (via uDENN domain); the GTP-bound form is preferred for interaction (By similarity).</text>
</comment>
<comment type="subcellular location">
    <subcellularLocation>
        <location evidence="7">Cell membrane</location>
        <topology evidence="7">Lipid-anchor</topology>
        <orientation evidence="7">Cytoplasmic side</orientation>
    </subcellularLocation>
    <subcellularLocation>
        <location evidence="6">Golgi apparatus</location>
    </subcellularLocation>
    <text evidence="6">Colocalizes with GAS8/DRC4 in the Golgi apparatus.</text>
</comment>
<comment type="domain">
    <text evidence="4">Switch 1, switch 2 and the interswitch regions are characteristic of Rab GTPases and mediate the interactions with Rab downstream effectors. The switch regions undergo conformational changes upon nucleotide binding which drives interaction with specific sets of effector proteins, with most effectors only binding to GTP-bound Rab.</text>
</comment>
<comment type="PTM">
    <text evidence="4">Phosphorylation of Thr-86 in the switch II region by LRRK2 prevents the association of RAB regulatory proteins, including CHM, CHML and RAB GDP dissociation inhibitor GDI2.</text>
</comment>
<comment type="similarity">
    <text evidence="7">Belongs to the small GTPase superfamily. Rab family.</text>
</comment>
<keyword id="KW-0007">Acetylation</keyword>
<keyword id="KW-1003">Cell membrane</keyword>
<keyword id="KW-0333">Golgi apparatus</keyword>
<keyword id="KW-0342">GTP-binding</keyword>
<keyword id="KW-0378">Hydrolase</keyword>
<keyword id="KW-0449">Lipoprotein</keyword>
<keyword id="KW-0460">Magnesium</keyword>
<keyword id="KW-0472">Membrane</keyword>
<keyword id="KW-0479">Metal-binding</keyword>
<keyword id="KW-0488">Methylation</keyword>
<keyword id="KW-0547">Nucleotide-binding</keyword>
<keyword id="KW-0597">Phosphoprotein</keyword>
<keyword id="KW-0636">Prenylation</keyword>
<keyword id="KW-0653">Protein transport</keyword>
<keyword id="KW-1185">Reference proteome</keyword>
<keyword id="KW-0813">Transport</keyword>
<feature type="initiator methionine" description="Removed" evidence="2">
    <location>
        <position position="1"/>
    </location>
</feature>
<feature type="chain" id="PRO_0000121080" description="Ras-related protein Rab-3B">
    <location>
        <begin position="2"/>
        <end position="219"/>
    </location>
</feature>
<feature type="short sequence motif" description="Switch 1" evidence="4">
    <location>
        <begin position="45"/>
        <end position="58"/>
    </location>
</feature>
<feature type="short sequence motif" description="Switch 2" evidence="4">
    <location>
        <begin position="78"/>
        <end position="96"/>
    </location>
</feature>
<feature type="binding site" evidence="4">
    <location>
        <position position="31"/>
    </location>
    <ligand>
        <name>GTP</name>
        <dbReference type="ChEBI" id="CHEBI:37565"/>
    </ligand>
</feature>
<feature type="binding site" evidence="4">
    <location>
        <position position="32"/>
    </location>
    <ligand>
        <name>GTP</name>
        <dbReference type="ChEBI" id="CHEBI:37565"/>
    </ligand>
</feature>
<feature type="binding site" evidence="4">
    <location>
        <position position="33"/>
    </location>
    <ligand>
        <name>GTP</name>
        <dbReference type="ChEBI" id="CHEBI:37565"/>
    </ligand>
</feature>
<feature type="binding site" evidence="4">
    <location>
        <position position="34"/>
    </location>
    <ligand>
        <name>GTP</name>
        <dbReference type="ChEBI" id="CHEBI:37565"/>
    </ligand>
</feature>
<feature type="binding site" evidence="4">
    <location>
        <position position="35"/>
    </location>
    <ligand>
        <name>GTP</name>
        <dbReference type="ChEBI" id="CHEBI:37565"/>
    </ligand>
</feature>
<feature type="binding site" evidence="4">
    <location>
        <position position="36"/>
    </location>
    <ligand>
        <name>GTP</name>
        <dbReference type="ChEBI" id="CHEBI:37565"/>
    </ligand>
</feature>
<feature type="binding site" evidence="4">
    <location>
        <position position="36"/>
    </location>
    <ligand>
        <name>Mg(2+)</name>
        <dbReference type="ChEBI" id="CHEBI:18420"/>
    </ligand>
</feature>
<feature type="binding site" evidence="4">
    <location>
        <position position="37"/>
    </location>
    <ligand>
        <name>GTP</name>
        <dbReference type="ChEBI" id="CHEBI:37565"/>
    </ligand>
</feature>
<feature type="binding site" evidence="4">
    <location>
        <position position="49"/>
    </location>
    <ligand>
        <name>GTP</name>
        <dbReference type="ChEBI" id="CHEBI:37565"/>
    </ligand>
</feature>
<feature type="binding site" evidence="4">
    <location>
        <position position="53"/>
    </location>
    <ligand>
        <name>GTP</name>
        <dbReference type="ChEBI" id="CHEBI:37565"/>
    </ligand>
</feature>
<feature type="binding site" evidence="4">
    <location>
        <position position="54"/>
    </location>
    <ligand>
        <name>Mg(2+)</name>
        <dbReference type="ChEBI" id="CHEBI:18420"/>
    </ligand>
</feature>
<feature type="binding site" evidence="4">
    <location>
        <position position="77"/>
    </location>
    <ligand>
        <name>Mg(2+)</name>
        <dbReference type="ChEBI" id="CHEBI:18420"/>
    </ligand>
</feature>
<feature type="binding site" evidence="4">
    <location>
        <position position="80"/>
    </location>
    <ligand>
        <name>GTP</name>
        <dbReference type="ChEBI" id="CHEBI:37565"/>
    </ligand>
</feature>
<feature type="binding site" evidence="4">
    <location>
        <position position="135"/>
    </location>
    <ligand>
        <name>GTP</name>
        <dbReference type="ChEBI" id="CHEBI:37565"/>
    </ligand>
</feature>
<feature type="binding site" evidence="4">
    <location>
        <position position="136"/>
    </location>
    <ligand>
        <name>GTP</name>
        <dbReference type="ChEBI" id="CHEBI:37565"/>
    </ligand>
</feature>
<feature type="binding site" evidence="4">
    <location>
        <position position="138"/>
    </location>
    <ligand>
        <name>GTP</name>
        <dbReference type="ChEBI" id="CHEBI:37565"/>
    </ligand>
</feature>
<feature type="binding site" evidence="4">
    <location>
        <position position="166"/>
    </location>
    <ligand>
        <name>GTP</name>
        <dbReference type="ChEBI" id="CHEBI:37565"/>
    </ligand>
</feature>
<feature type="binding site" evidence="4">
    <location>
        <position position="167"/>
    </location>
    <ligand>
        <name>GTP</name>
        <dbReference type="ChEBI" id="CHEBI:37565"/>
    </ligand>
</feature>
<feature type="modified residue" description="N-acetylalanine" evidence="2">
    <location>
        <position position="2"/>
    </location>
</feature>
<feature type="modified residue" description="Phosphothreonine" evidence="4">
    <location>
        <position position="86"/>
    </location>
</feature>
<feature type="modified residue" description="Phosphoserine" evidence="5">
    <location>
        <position position="188"/>
    </location>
</feature>
<feature type="modified residue" description="Cysteine methyl ester" evidence="1">
    <location>
        <position position="219"/>
    </location>
</feature>
<feature type="lipid moiety-binding region" description="S-geranylgeranyl cysteine" evidence="1">
    <location>
        <position position="217"/>
    </location>
</feature>
<feature type="lipid moiety-binding region" description="S-geranylgeranyl cysteine" evidence="1">
    <location>
        <position position="219"/>
    </location>
</feature>
<gene>
    <name type="primary">RAB3B</name>
</gene>
<organism>
    <name type="scientific">Bos taurus</name>
    <name type="common">Bovine</name>
    <dbReference type="NCBI Taxonomy" id="9913"/>
    <lineage>
        <taxon>Eukaryota</taxon>
        <taxon>Metazoa</taxon>
        <taxon>Chordata</taxon>
        <taxon>Craniata</taxon>
        <taxon>Vertebrata</taxon>
        <taxon>Euteleostomi</taxon>
        <taxon>Mammalia</taxon>
        <taxon>Eutheria</taxon>
        <taxon>Laurasiatheria</taxon>
        <taxon>Artiodactyla</taxon>
        <taxon>Ruminantia</taxon>
        <taxon>Pecora</taxon>
        <taxon>Bovidae</taxon>
        <taxon>Bovinae</taxon>
        <taxon>Bos</taxon>
    </lineage>
</organism>
<sequence>MASVTDGKAGVKDASDQNFDYMFKLLIIGNSSVGKTSFLFRYADDTFTPAFVSTVGIDFKVKTVYRHEKRVKLQIWDTAGQERYRTITTAYYRGAMGFILMYDITNEESFNAVQDWATQIKTYSWDNAQVILVGNKCDMEEERVVPTEKGRLLAEQLGFDFFEASAKENISVRQAFERLVDAICDKMSDTLDTDPSLLGTSKNTRLSDTPPLLQQNCSC</sequence>
<reference key="1">
    <citation type="journal article" date="1988" name="J. Biol. Chem.">
        <title>Nucleotide and deduced amino acid sequences of a GTP-binding protein family with molecular weights of 25,000 from bovine brain.</title>
        <authorList>
            <person name="Matsui Y."/>
            <person name="Kikuchi A."/>
            <person name="Kondo J."/>
            <person name="Hishida T."/>
            <person name="Teranishi Y."/>
            <person name="Takai Y."/>
        </authorList>
    </citation>
    <scope>NUCLEOTIDE SEQUENCE [MRNA]</scope>
</reference>
<reference key="2">
    <citation type="submission" date="2006-08" db="EMBL/GenBank/DDBJ databases">
        <authorList>
            <consortium name="NIH - Mammalian Gene Collection (MGC) project"/>
        </authorList>
    </citation>
    <scope>NUCLEOTIDE SEQUENCE [LARGE SCALE MRNA]</scope>
    <source>
        <strain>Hereford</strain>
        <tissue>Hypothalamus</tissue>
    </source>
</reference>
<accession>P10948</accession>
<accession>Q0IIB4</accession>